<name>NSP6_ROTHK</name>
<sequence length="92" mass="10931">MNRLLQRQLFLENLLVGTNSMFHQISMRSINTCCRSLQRILDHLILLQTIHSPAFRLDRMRLRQMQMLACLWIHQHNHDLQATLGAIKWISP</sequence>
<protein>
    <recommendedName>
        <fullName evidence="1">Non-structural protein 6</fullName>
        <shortName evidence="1">NSP6</shortName>
    </recommendedName>
</protein>
<organismHost>
    <name type="scientific">Homo sapiens</name>
    <name type="common">Human</name>
    <dbReference type="NCBI Taxonomy" id="9606"/>
</organismHost>
<dbReference type="EMBL" id="AB022773">
    <property type="status" value="NOT_ANNOTATED_CDS"/>
    <property type="molecule type" value="mRNA"/>
</dbReference>
<dbReference type="EMBL" id="AB008661">
    <property type="status" value="NOT_ANNOTATED_CDS"/>
    <property type="molecule type" value="mRNA"/>
</dbReference>
<dbReference type="SMR" id="P0C711"/>
<dbReference type="Proteomes" id="UP000001458">
    <property type="component" value="Genome"/>
</dbReference>
<dbReference type="GO" id="GO:0033650">
    <property type="term" value="C:host cell mitochondrion"/>
    <property type="evidence" value="ECO:0007669"/>
    <property type="project" value="UniProtKB-SubCell"/>
</dbReference>
<dbReference type="HAMAP" id="MF_04093">
    <property type="entry name" value="ROTA_NSP6"/>
    <property type="match status" value="1"/>
</dbReference>
<dbReference type="InterPro" id="IPR006950">
    <property type="entry name" value="Rotavirus_NSP6"/>
</dbReference>
<dbReference type="Pfam" id="PF04866">
    <property type="entry name" value="Rota_NS6"/>
    <property type="match status" value="1"/>
</dbReference>
<accession>P0C711</accession>
<proteinExistence type="inferred from homology"/>
<feature type="chain" id="PRO_0000369519" description="Non-structural protein 6">
    <location>
        <begin position="1"/>
        <end position="92"/>
    </location>
</feature>
<reference key="1">
    <citation type="submission" date="1999-01" db="EMBL/GenBank/DDBJ databases">
        <authorList>
            <person name="Taniguchi K."/>
        </authorList>
    </citation>
    <scope>NUCLEOTIDE SEQUENCE [MRNA]</scope>
</reference>
<reference key="2">
    <citation type="journal article" date="1998" name="J. Med. Virol.">
        <title>Serological and genomic characterization of human rotaviruses detected in China.</title>
        <authorList>
            <person name="Wu H."/>
            <person name="Taniguchi K."/>
            <person name="Urasawa T."/>
            <person name="Urasawa S."/>
        </authorList>
    </citation>
    <scope>NUCLEOTIDE SEQUENCE [MRNA]</scope>
</reference>
<keyword id="KW-1035">Host cytoplasm</keyword>
<keyword id="KW-1045">Host mitochondrion</keyword>
<comment type="subunit">
    <text evidence="1">Interacts with NSP2 and NSP5.</text>
</comment>
<comment type="subcellular location">
    <subcellularLocation>
        <location evidence="1">Host cytoplasm</location>
    </subcellularLocation>
    <subcellularLocation>
        <location evidence="1">Host mitochondrion</location>
    </subcellularLocation>
    <text evidence="1">Found in spherical cytoplasmic structures, called viral factories, that appear early after infection and are the site of viral replication and packaging.</text>
</comment>
<comment type="similarity">
    <text evidence="1">Belongs to the rotavirus A NSP6 family.</text>
</comment>
<organism>
    <name type="scientific">Rotavirus A (strain RVA/Human/Japan/KU/1995/G1P1A[8])</name>
    <name type="common">RV-A</name>
    <dbReference type="NCBI Taxonomy" id="10952"/>
    <lineage>
        <taxon>Viruses</taxon>
        <taxon>Riboviria</taxon>
        <taxon>Orthornavirae</taxon>
        <taxon>Duplornaviricota</taxon>
        <taxon>Resentoviricetes</taxon>
        <taxon>Reovirales</taxon>
        <taxon>Sedoreoviridae</taxon>
        <taxon>Rotavirus</taxon>
        <taxon>Rotavirus A</taxon>
    </lineage>
</organism>
<evidence type="ECO:0000255" key="1">
    <source>
        <dbReference type="HAMAP-Rule" id="MF_04093"/>
    </source>
</evidence>